<comment type="function">
    <text evidence="1 2">Component of the multi-pass translocon (MPT) complex that mediates insertion of multi-pass membrane proteins into the lipid bilayer of membranes. The MPT complex takes over after the SEC61 complex: following membrane insertion of the first few transmembrane segments of proteins by the SEC61 complex, the MPT complex occludes the lateral gate of the SEC61 complex to promote insertion of subsequent transmembrane regions (By similarity). May antagonize Nodal signaling and subsequent organization of axial structures during mesodermal patterning, via its interaction with NOMO (By similarity).</text>
</comment>
<comment type="subunit">
    <text evidence="2">Component of the back of Sec61 (BOS) complex, composed of NCLN/Nicalin, NOMO1 and TMEM147. The BOS complex is part of the multi-pass translocon (MPT) complex, composed of three subcomplexes, the GEL complex (composed of RAB5IF/OPTI and TMCO1), the BOS complex (composed of NCLN/Nicalin, NOMO1 and TMEM147) and the PAT complex (composed of WDR83OS/Asterix and CCDC47). The MPT complex associates with the SEC61 complex.</text>
</comment>
<comment type="subcellular location">
    <subcellularLocation>
        <location evidence="2">Endoplasmic reticulum membrane</location>
        <topology evidence="2">Single-pass membrane protein</topology>
    </subcellularLocation>
</comment>
<comment type="similarity">
    <text evidence="4">Belongs to the nicastrin family.</text>
</comment>
<name>NCLN_RAT</name>
<gene>
    <name type="primary">Ncln</name>
</gene>
<reference key="1">
    <citation type="journal article" date="2004" name="Genome Res.">
        <title>The status, quality, and expansion of the NIH full-length cDNA project: the Mammalian Gene Collection (MGC).</title>
        <authorList>
            <consortium name="The MGC Project Team"/>
        </authorList>
    </citation>
    <scope>NUCLEOTIDE SEQUENCE [LARGE SCALE MRNA]</scope>
    <source>
        <tissue>Lung</tissue>
    </source>
</reference>
<organism>
    <name type="scientific">Rattus norvegicus</name>
    <name type="common">Rat</name>
    <dbReference type="NCBI Taxonomy" id="10116"/>
    <lineage>
        <taxon>Eukaryota</taxon>
        <taxon>Metazoa</taxon>
        <taxon>Chordata</taxon>
        <taxon>Craniata</taxon>
        <taxon>Vertebrata</taxon>
        <taxon>Euteleostomi</taxon>
        <taxon>Mammalia</taxon>
        <taxon>Eutheria</taxon>
        <taxon>Euarchontoglires</taxon>
        <taxon>Glires</taxon>
        <taxon>Rodentia</taxon>
        <taxon>Myomorpha</taxon>
        <taxon>Muroidea</taxon>
        <taxon>Muridae</taxon>
        <taxon>Murinae</taxon>
        <taxon>Rattus</taxon>
    </lineage>
</organism>
<protein>
    <recommendedName>
        <fullName evidence="4">BOS complex subunit NCLN</fullName>
    </recommendedName>
    <alternativeName>
        <fullName>Nicalin</fullName>
    </alternativeName>
    <alternativeName>
        <fullName>Nicastrin-like protein</fullName>
    </alternativeName>
</protein>
<feature type="signal peptide" evidence="3">
    <location>
        <begin position="1"/>
        <end position="42"/>
    </location>
</feature>
<feature type="chain" id="PRO_0000019689" description="BOS complex subunit NCLN">
    <location>
        <begin position="43"/>
        <end position="563"/>
    </location>
</feature>
<feature type="topological domain" description="Lumenal" evidence="3">
    <location>
        <begin position="43"/>
        <end position="522"/>
    </location>
</feature>
<feature type="transmembrane region" description="Helical" evidence="3">
    <location>
        <begin position="523"/>
        <end position="543"/>
    </location>
</feature>
<feature type="topological domain" description="Cytoplasmic" evidence="3">
    <location>
        <begin position="544"/>
        <end position="563"/>
    </location>
</feature>
<feature type="glycosylation site" description="N-linked (GlcNAc...) asparagine" evidence="3">
    <location>
        <position position="241"/>
    </location>
</feature>
<feature type="glycosylation site" description="N-linked (GlcNAc...) asparagine" evidence="3">
    <location>
        <position position="428"/>
    </location>
</feature>
<evidence type="ECO:0000250" key="1">
    <source>
        <dbReference type="UniProtKB" id="Q6NZ07"/>
    </source>
</evidence>
<evidence type="ECO:0000250" key="2">
    <source>
        <dbReference type="UniProtKB" id="Q969V3"/>
    </source>
</evidence>
<evidence type="ECO:0000255" key="3"/>
<evidence type="ECO:0000305" key="4"/>
<proteinExistence type="evidence at transcript level"/>
<sequence length="563" mass="62992">MLEEAGEVLENVLKASCLPLGFIVFLPAVLLLVAPPLPAADAAHEFTVYRMQQYDLQGQPYGTRNAVLNTEARTVDADVLSRRCVLMRLLDFSYEHYQKALRQSAGAVVIILPRAMAAVPQDVVRQFMEIEPEMLAMETVVPVYFAVEDEALLSIYEQTQAASASQGSASAAEVLLHTATANGFQMVTSGAQSQAVSDWLITSVEGRLTGLGGEDLPTIVIVAHYDAFGVAPWLSLGADSNGSGISVLLELARLFSRLYTYKRTHAAYNLLFFASGGGKFNYQGTKRWLEDSLDHTDSSLLQDNVAFVLCLDTVGRGSHLRLHVSKPPREGTLQHVFLRELEMVAAHQFPDVSFSMVHKKINLADDVLAWEHERFAIRRLPAFTLSHLENHRAGPRSSIMDVRSRVDSKTLTRNTRIIAEALTRVIYNLTEKGTPPDMPVFTEQMQVQQEQIDSVMDWLTNQPRAAQLLDKDGTFLSTLEHFLSRYLKDVRQHHVKADKRDPEFVFYDQLKQVMNAYRVKPAIFDLLLALCIGAYLGMAYTAVQHFHVLYKTVQRLLLKAKAQ</sequence>
<keyword id="KW-0256">Endoplasmic reticulum</keyword>
<keyword id="KW-0325">Glycoprotein</keyword>
<keyword id="KW-0472">Membrane</keyword>
<keyword id="KW-1185">Reference proteome</keyword>
<keyword id="KW-0732">Signal</keyword>
<keyword id="KW-0812">Transmembrane</keyword>
<keyword id="KW-1133">Transmembrane helix</keyword>
<dbReference type="EMBL" id="BC083785">
    <property type="protein sequence ID" value="AAH83785.1"/>
    <property type="molecule type" value="mRNA"/>
</dbReference>
<dbReference type="RefSeq" id="NP_001014104.1">
    <property type="nucleotide sequence ID" value="NM_001014082.1"/>
</dbReference>
<dbReference type="SMR" id="Q5XIA1"/>
<dbReference type="FunCoup" id="Q5XIA1">
    <property type="interactions" value="2739"/>
</dbReference>
<dbReference type="IntAct" id="Q5XIA1">
    <property type="interactions" value="1"/>
</dbReference>
<dbReference type="STRING" id="10116.ENSRNOP00000007110"/>
<dbReference type="MEROPS" id="M28.978"/>
<dbReference type="GlyCosmos" id="Q5XIA1">
    <property type="glycosylation" value="2 sites, No reported glycans"/>
</dbReference>
<dbReference type="GlyGen" id="Q5XIA1">
    <property type="glycosylation" value="2 sites"/>
</dbReference>
<dbReference type="PhosphoSitePlus" id="Q5XIA1"/>
<dbReference type="jPOST" id="Q5XIA1"/>
<dbReference type="PaxDb" id="10116-ENSRNOP00000007110"/>
<dbReference type="GeneID" id="314648"/>
<dbReference type="KEGG" id="rno:314648"/>
<dbReference type="UCSC" id="RGD:1309355">
    <property type="organism name" value="rat"/>
</dbReference>
<dbReference type="AGR" id="RGD:1309355"/>
<dbReference type="CTD" id="56926"/>
<dbReference type="RGD" id="1309355">
    <property type="gene designation" value="Ncln"/>
</dbReference>
<dbReference type="eggNOG" id="KOG2526">
    <property type="taxonomic scope" value="Eukaryota"/>
</dbReference>
<dbReference type="HOGENOM" id="CLU_034102_2_0_1"/>
<dbReference type="InParanoid" id="Q5XIA1"/>
<dbReference type="OrthoDB" id="31386at9989"/>
<dbReference type="PhylomeDB" id="Q5XIA1"/>
<dbReference type="TreeFam" id="TF105849"/>
<dbReference type="PRO" id="PR:Q5XIA1"/>
<dbReference type="Proteomes" id="UP000002494">
    <property type="component" value="Unplaced"/>
</dbReference>
<dbReference type="GO" id="GO:0005789">
    <property type="term" value="C:endoplasmic reticulum membrane"/>
    <property type="evidence" value="ECO:0000266"/>
    <property type="project" value="RGD"/>
</dbReference>
<dbReference type="GO" id="GO:0160064">
    <property type="term" value="C:multi-pass translocon complex"/>
    <property type="evidence" value="ECO:0000250"/>
    <property type="project" value="UniProtKB"/>
</dbReference>
<dbReference type="GO" id="GO:0032991">
    <property type="term" value="C:protein-containing complex"/>
    <property type="evidence" value="ECO:0000266"/>
    <property type="project" value="RGD"/>
</dbReference>
<dbReference type="GO" id="GO:0043022">
    <property type="term" value="F:ribosome binding"/>
    <property type="evidence" value="ECO:0000250"/>
    <property type="project" value="UniProtKB"/>
</dbReference>
<dbReference type="GO" id="GO:0160063">
    <property type="term" value="P:multi-pass transmembrane protein insertion into ER membrane"/>
    <property type="evidence" value="ECO:0000250"/>
    <property type="project" value="UniProtKB"/>
</dbReference>
<dbReference type="GO" id="GO:0050821">
    <property type="term" value="P:protein stabilization"/>
    <property type="evidence" value="ECO:0000266"/>
    <property type="project" value="RGD"/>
</dbReference>
<dbReference type="GO" id="GO:0061635">
    <property type="term" value="P:regulation of protein complex stability"/>
    <property type="evidence" value="ECO:0000266"/>
    <property type="project" value="RGD"/>
</dbReference>
<dbReference type="GO" id="GO:0043254">
    <property type="term" value="P:regulation of protein-containing complex assembly"/>
    <property type="evidence" value="ECO:0000266"/>
    <property type="project" value="RGD"/>
</dbReference>
<dbReference type="GO" id="GO:0009966">
    <property type="term" value="P:regulation of signal transduction"/>
    <property type="evidence" value="ECO:0000318"/>
    <property type="project" value="GO_Central"/>
</dbReference>
<dbReference type="CDD" id="cd03882">
    <property type="entry name" value="M28_nicalin_like"/>
    <property type="match status" value="1"/>
</dbReference>
<dbReference type="FunFam" id="3.40.630.10:FF:000021">
    <property type="entry name" value="Nicalin"/>
    <property type="match status" value="1"/>
</dbReference>
<dbReference type="Gene3D" id="3.40.630.10">
    <property type="entry name" value="Zn peptidases"/>
    <property type="match status" value="1"/>
</dbReference>
<dbReference type="InterPro" id="IPR016574">
    <property type="entry name" value="Nicalin"/>
</dbReference>
<dbReference type="InterPro" id="IPR007484">
    <property type="entry name" value="Peptidase_M28"/>
</dbReference>
<dbReference type="PANTHER" id="PTHR31826">
    <property type="entry name" value="NICALIN"/>
    <property type="match status" value="1"/>
</dbReference>
<dbReference type="Pfam" id="PF04389">
    <property type="entry name" value="Peptidase_M28"/>
    <property type="match status" value="1"/>
</dbReference>
<dbReference type="PIRSF" id="PIRSF011018">
    <property type="entry name" value="Nicalin"/>
    <property type="match status" value="1"/>
</dbReference>
<dbReference type="SUPFAM" id="SSF53187">
    <property type="entry name" value="Zn-dependent exopeptidases"/>
    <property type="match status" value="1"/>
</dbReference>
<accession>Q5XIA1</accession>